<accession>P21764</accession>
<reference key="1">
    <citation type="journal article" date="1990" name="Nucleic Acids Res.">
        <title>Nucleotide sequence of a new lignin peroxidase gene GLG3 from the white-rot fungus, Phanerochaete chrysosporium.</title>
        <authorList>
            <person name="Naidu P.S."/>
            <person name="Reddy C.A."/>
        </authorList>
    </citation>
    <scope>NUCLEOTIDE SEQUENCE [GENOMIC DNA]</scope>
    <source>
        <strain>ATCC 24725 / DSM 6909 / CBS 481.73 / BCRC 36200 / NRRL 6361 / VKM F-1767</strain>
    </source>
</reference>
<protein>
    <recommendedName>
        <fullName>Ligninase LG3</fullName>
        <ecNumber evidence="1">1.11.1.14</ecNumber>
    </recommendedName>
    <alternativeName>
        <fullName>Diarylpropane peroxidase</fullName>
    </alternativeName>
    <alternativeName>
        <fullName>Lignin peroxidase</fullName>
    </alternativeName>
</protein>
<sequence length="372" mass="39536">MAFKQLFAAISLALSLSAANAAAVIEKRATCSNGKTVGDASSCAWFDVLDDIQQNLFHGGQCGAEAHESIRLVFHDSIAISPAMEAQGKFGGGGADGSIMIFDDIETAFHPNIGLDEIVKLQKPFVQKHGCTPGDFIAFAGAVALSNCPGAPQMNFFTGRAPATQAAPDGLVPEPFHTVDQIINRVNDAGEFDELELVWMLSAHSVAAVNDVDPTVQGLPFDSTPGIFDSQFFVETQLRGTAFPGSGGNQGEVESPLPGEIRIQSDHTIARDSRTACEWQSFVNNQSKLVDDFQFIFLALTQLGQDPNAMTDCSDVIPQSKPIPGNLPFSFFPAGKTIKDVEQACAETPFPTLTTLPGPETSVQRIPPPPGA</sequence>
<comment type="function">
    <text evidence="1">Depolymerization of lignin. Catalyzes the C(alpha)-C(beta) cleavage of the propyl side chains of lignin.</text>
</comment>
<comment type="catalytic activity">
    <reaction evidence="1">
        <text>1-(3,4-dimethoxyphenyl)-2-(2-methoxyphenoxy)propane-1,3-diol + H2O2 = 3,4-dimethoxybenzaldehyde + guaiacol + glycolaldehyde + H2O</text>
        <dbReference type="Rhea" id="RHEA:48004"/>
        <dbReference type="ChEBI" id="CHEBI:15377"/>
        <dbReference type="ChEBI" id="CHEBI:16240"/>
        <dbReference type="ChEBI" id="CHEBI:17071"/>
        <dbReference type="ChEBI" id="CHEBI:17098"/>
        <dbReference type="ChEBI" id="CHEBI:28591"/>
        <dbReference type="ChEBI" id="CHEBI:86963"/>
        <dbReference type="EC" id="1.11.1.14"/>
    </reaction>
</comment>
<comment type="catalytic activity">
    <reaction evidence="1">
        <text>2 (3,4-dimethoxyphenyl)methanol + H2O2 = 2 (3,4-dimethoxyphenyl)methanol radical + 2 H2O</text>
        <dbReference type="Rhea" id="RHEA:30271"/>
        <dbReference type="ChEBI" id="CHEBI:15377"/>
        <dbReference type="ChEBI" id="CHEBI:16240"/>
        <dbReference type="ChEBI" id="CHEBI:62150"/>
        <dbReference type="ChEBI" id="CHEBI:88143"/>
        <dbReference type="EC" id="1.11.1.14"/>
    </reaction>
</comment>
<comment type="cofactor">
    <cofactor evidence="3">
        <name>heme b</name>
        <dbReference type="ChEBI" id="CHEBI:60344"/>
    </cofactor>
    <text evidence="3">Binds 1 heme b (iron(II)-protoporphyrin IX) group per subunit.</text>
</comment>
<comment type="cofactor">
    <cofactor evidence="3">
        <name>Ca(2+)</name>
        <dbReference type="ChEBI" id="CHEBI:29108"/>
    </cofactor>
    <text evidence="3">Binds 2 calcium ions per subunit.</text>
</comment>
<comment type="pathway">
    <text>Secondary metabolite metabolism; lignin degradation.</text>
</comment>
<comment type="developmental stage">
    <text>Ligninases are expressed during secondary metabolism, and are triggered by nutrient limitation.</text>
</comment>
<comment type="similarity">
    <text evidence="6">Belongs to the peroxidase family. Ligninase subfamily.</text>
</comment>
<feature type="signal peptide" evidence="2">
    <location>
        <begin position="1"/>
        <end position="21"/>
    </location>
</feature>
<feature type="propeptide" id="PRO_0000023764">
    <location>
        <begin position="22"/>
        <end position="28"/>
    </location>
</feature>
<feature type="chain" id="PRO_0000023765" description="Ligninase LG3">
    <location>
        <begin position="29"/>
        <end position="372"/>
    </location>
</feature>
<feature type="region of interest" description="Disordered" evidence="5">
    <location>
        <begin position="350"/>
        <end position="372"/>
    </location>
</feature>
<feature type="compositionally biased region" description="Low complexity" evidence="5">
    <location>
        <begin position="350"/>
        <end position="361"/>
    </location>
</feature>
<feature type="active site" description="Proton acceptor" evidence="3 4">
    <location>
        <position position="75"/>
    </location>
</feature>
<feature type="binding site" evidence="3">
    <location>
        <position position="76"/>
    </location>
    <ligand>
        <name>Ca(2+)</name>
        <dbReference type="ChEBI" id="CHEBI:29108"/>
        <label>1</label>
    </ligand>
</feature>
<feature type="binding site" evidence="3">
    <location>
        <position position="94"/>
    </location>
    <ligand>
        <name>Ca(2+)</name>
        <dbReference type="ChEBI" id="CHEBI:29108"/>
        <label>1</label>
    </ligand>
</feature>
<feature type="binding site" evidence="3">
    <location>
        <position position="96"/>
    </location>
    <ligand>
        <name>Ca(2+)</name>
        <dbReference type="ChEBI" id="CHEBI:29108"/>
        <label>1</label>
    </ligand>
</feature>
<feature type="binding site" evidence="3">
    <location>
        <position position="98"/>
    </location>
    <ligand>
        <name>Ca(2+)</name>
        <dbReference type="ChEBI" id="CHEBI:29108"/>
        <label>1</label>
    </ligand>
</feature>
<feature type="binding site" description="axial binding residue" evidence="3">
    <location>
        <position position="204"/>
    </location>
    <ligand>
        <name>heme b</name>
        <dbReference type="ChEBI" id="CHEBI:60344"/>
    </ligand>
    <ligandPart>
        <name>Fe</name>
        <dbReference type="ChEBI" id="CHEBI:18248"/>
    </ligandPart>
</feature>
<feature type="binding site" evidence="3">
    <location>
        <position position="205"/>
    </location>
    <ligand>
        <name>Ca(2+)</name>
        <dbReference type="ChEBI" id="CHEBI:29108"/>
        <label>2</label>
    </ligand>
</feature>
<feature type="binding site" evidence="3">
    <location>
        <position position="222"/>
    </location>
    <ligand>
        <name>Ca(2+)</name>
        <dbReference type="ChEBI" id="CHEBI:29108"/>
        <label>2</label>
    </ligand>
</feature>
<feature type="binding site" evidence="3">
    <location>
        <position position="224"/>
    </location>
    <ligand>
        <name>Ca(2+)</name>
        <dbReference type="ChEBI" id="CHEBI:29108"/>
        <label>2</label>
    </ligand>
</feature>
<feature type="binding site" evidence="3">
    <location>
        <position position="227"/>
    </location>
    <ligand>
        <name>Ca(2+)</name>
        <dbReference type="ChEBI" id="CHEBI:29108"/>
        <label>2</label>
    </ligand>
</feature>
<feature type="binding site" evidence="3">
    <location>
        <position position="229"/>
    </location>
    <ligand>
        <name>Ca(2+)</name>
        <dbReference type="ChEBI" id="CHEBI:29108"/>
        <label>2</label>
    </ligand>
</feature>
<feature type="site" description="Transition state stabilizer" evidence="3">
    <location>
        <position position="71"/>
    </location>
</feature>
<feature type="glycosylation site" description="N-linked (GlcNAc...) asparagine" evidence="2">
    <location>
        <position position="285"/>
    </location>
</feature>
<feature type="disulfide bond" evidence="3">
    <location>
        <begin position="31"/>
        <end position="43"/>
    </location>
</feature>
<feature type="disulfide bond" evidence="3">
    <location>
        <begin position="62"/>
        <end position="148"/>
    </location>
</feature>
<feature type="disulfide bond" evidence="3">
    <location>
        <begin position="277"/>
        <end position="345"/>
    </location>
</feature>
<keyword id="KW-0165">Cleavage on pair of basic residues</keyword>
<keyword id="KW-1015">Disulfide bond</keyword>
<keyword id="KW-0325">Glycoprotein</keyword>
<keyword id="KW-0349">Heme</keyword>
<keyword id="KW-0376">Hydrogen peroxide</keyword>
<keyword id="KW-0408">Iron</keyword>
<keyword id="KW-0439">Lignin degradation</keyword>
<keyword id="KW-0479">Metal-binding</keyword>
<keyword id="KW-0560">Oxidoreductase</keyword>
<keyword id="KW-0575">Peroxidase</keyword>
<keyword id="KW-0732">Signal</keyword>
<keyword id="KW-0865">Zymogen</keyword>
<organism>
    <name type="scientific">Phanerodontia chrysosporium</name>
    <name type="common">White-rot fungus</name>
    <name type="synonym">Sporotrichum pruinosum</name>
    <dbReference type="NCBI Taxonomy" id="2822231"/>
    <lineage>
        <taxon>Eukaryota</taxon>
        <taxon>Fungi</taxon>
        <taxon>Dikarya</taxon>
        <taxon>Basidiomycota</taxon>
        <taxon>Agaricomycotina</taxon>
        <taxon>Agaricomycetes</taxon>
        <taxon>Polyporales</taxon>
        <taxon>Phanerochaetaceae</taxon>
        <taxon>Phanerodontia</taxon>
    </lineage>
</organism>
<gene>
    <name type="primary">GLG3</name>
    <name type="synonym">LIP</name>
</gene>
<evidence type="ECO:0000250" key="1">
    <source>
        <dbReference type="UniProtKB" id="P06181"/>
    </source>
</evidence>
<evidence type="ECO:0000255" key="2"/>
<evidence type="ECO:0000255" key="3">
    <source>
        <dbReference type="PROSITE-ProRule" id="PRU00297"/>
    </source>
</evidence>
<evidence type="ECO:0000255" key="4">
    <source>
        <dbReference type="PROSITE-ProRule" id="PRU10012"/>
    </source>
</evidence>
<evidence type="ECO:0000256" key="5">
    <source>
        <dbReference type="SAM" id="MobiDB-lite"/>
    </source>
</evidence>
<evidence type="ECO:0000305" key="6"/>
<name>LIG3_PHACH</name>
<proteinExistence type="evidence at transcript level"/>
<dbReference type="EC" id="1.11.1.14" evidence="1"/>
<dbReference type="EMBL" id="X51590">
    <property type="protein sequence ID" value="CAA35939.1"/>
    <property type="molecule type" value="Genomic_DNA"/>
</dbReference>
<dbReference type="PIR" id="A32322">
    <property type="entry name" value="A32322"/>
</dbReference>
<dbReference type="PIR" id="B32322">
    <property type="entry name" value="B32322"/>
</dbReference>
<dbReference type="PIR" id="PS0010">
    <property type="entry name" value="PS0010"/>
</dbReference>
<dbReference type="PIR" id="S13723">
    <property type="entry name" value="OPJG3P"/>
</dbReference>
<dbReference type="PIR" id="S69246">
    <property type="entry name" value="S69246"/>
</dbReference>
<dbReference type="SMR" id="P21764"/>
<dbReference type="CAZy" id="AA2">
    <property type="family name" value="Auxiliary Activities 2"/>
</dbReference>
<dbReference type="PeroxiBase" id="2482">
    <property type="entry name" value="PcLiP08_BKMF1767"/>
</dbReference>
<dbReference type="GlyCosmos" id="P21764">
    <property type="glycosylation" value="1 site, No reported glycans"/>
</dbReference>
<dbReference type="VEuPathDB" id="FungiDB:AGR57_14163"/>
<dbReference type="UniPathway" id="UPA00892"/>
<dbReference type="GO" id="GO:0016690">
    <property type="term" value="F:diarylpropane peroxidase activity"/>
    <property type="evidence" value="ECO:0007669"/>
    <property type="project" value="UniProtKB-EC"/>
</dbReference>
<dbReference type="GO" id="GO:0020037">
    <property type="term" value="F:heme binding"/>
    <property type="evidence" value="ECO:0007669"/>
    <property type="project" value="InterPro"/>
</dbReference>
<dbReference type="GO" id="GO:0046872">
    <property type="term" value="F:metal ion binding"/>
    <property type="evidence" value="ECO:0007669"/>
    <property type="project" value="UniProtKB-KW"/>
</dbReference>
<dbReference type="GO" id="GO:0034599">
    <property type="term" value="P:cellular response to oxidative stress"/>
    <property type="evidence" value="ECO:0007669"/>
    <property type="project" value="InterPro"/>
</dbReference>
<dbReference type="GO" id="GO:0042744">
    <property type="term" value="P:hydrogen peroxide catabolic process"/>
    <property type="evidence" value="ECO:0007669"/>
    <property type="project" value="UniProtKB-KW"/>
</dbReference>
<dbReference type="GO" id="GO:0046274">
    <property type="term" value="P:lignin catabolic process"/>
    <property type="evidence" value="ECO:0007669"/>
    <property type="project" value="UniProtKB-UniPathway"/>
</dbReference>
<dbReference type="GO" id="GO:0000302">
    <property type="term" value="P:response to reactive oxygen species"/>
    <property type="evidence" value="ECO:0007669"/>
    <property type="project" value="TreeGrafter"/>
</dbReference>
<dbReference type="CDD" id="cd00692">
    <property type="entry name" value="ligninase"/>
    <property type="match status" value="1"/>
</dbReference>
<dbReference type="Gene3D" id="1.10.520.10">
    <property type="match status" value="1"/>
</dbReference>
<dbReference type="Gene3D" id="1.10.420.10">
    <property type="entry name" value="Peroxidase, domain 2"/>
    <property type="match status" value="1"/>
</dbReference>
<dbReference type="InterPro" id="IPR044831">
    <property type="entry name" value="Ccp1-like"/>
</dbReference>
<dbReference type="InterPro" id="IPR002016">
    <property type="entry name" value="Haem_peroxidase"/>
</dbReference>
<dbReference type="InterPro" id="IPR010255">
    <property type="entry name" value="Haem_peroxidase_sf"/>
</dbReference>
<dbReference type="InterPro" id="IPR001621">
    <property type="entry name" value="Ligninase"/>
</dbReference>
<dbReference type="InterPro" id="IPR024589">
    <property type="entry name" value="Ligninase_C"/>
</dbReference>
<dbReference type="InterPro" id="IPR019794">
    <property type="entry name" value="Peroxidases_AS"/>
</dbReference>
<dbReference type="InterPro" id="IPR019793">
    <property type="entry name" value="Peroxidases_heam-ligand_BS"/>
</dbReference>
<dbReference type="PANTHER" id="PTHR31356:SF66">
    <property type="entry name" value="CATALASE-PEROXIDASE"/>
    <property type="match status" value="1"/>
</dbReference>
<dbReference type="PANTHER" id="PTHR31356">
    <property type="entry name" value="THYLAKOID LUMENAL 29 KDA PROTEIN, CHLOROPLASTIC-RELATED"/>
    <property type="match status" value="1"/>
</dbReference>
<dbReference type="Pfam" id="PF00141">
    <property type="entry name" value="peroxidase"/>
    <property type="match status" value="1"/>
</dbReference>
<dbReference type="Pfam" id="PF11895">
    <property type="entry name" value="Peroxidase_ext"/>
    <property type="match status" value="1"/>
</dbReference>
<dbReference type="PRINTS" id="PR00462">
    <property type="entry name" value="LIGNINASE"/>
</dbReference>
<dbReference type="PRINTS" id="PR00458">
    <property type="entry name" value="PEROXIDASE"/>
</dbReference>
<dbReference type="SUPFAM" id="SSF48113">
    <property type="entry name" value="Heme-dependent peroxidases"/>
    <property type="match status" value="1"/>
</dbReference>
<dbReference type="PROSITE" id="PS00435">
    <property type="entry name" value="PEROXIDASE_1"/>
    <property type="match status" value="1"/>
</dbReference>
<dbReference type="PROSITE" id="PS00436">
    <property type="entry name" value="PEROXIDASE_2"/>
    <property type="match status" value="1"/>
</dbReference>
<dbReference type="PROSITE" id="PS50873">
    <property type="entry name" value="PEROXIDASE_4"/>
    <property type="match status" value="1"/>
</dbReference>